<sequence>MNTLIGKTGIVVRNIQRAELDSIDALGRLGVATVHEAQNRKGLLSSKMRPIQQGTSLAGSAVTVLVAPGDNWMFHVAVEQCRPGDVLVVSPSSPCTDGYFGDLLATSLQARGVRALIVDAGVRDTQTLRDMGFAVWARAINAQGTVKETLGSVNLPVICGGQLINPGDIVVADDDGVVVVRRDECESTLVAAAERAGLEEEKRLRLAAGELGLDIYKMRERLEAKGLRYVDNIEDLEG</sequence>
<accession>A5W059</accession>
<name>HMGA_PSEP1</name>
<proteinExistence type="evidence at protein level"/>
<reference key="1">
    <citation type="submission" date="2007-05" db="EMBL/GenBank/DDBJ databases">
        <title>Complete sequence of Pseudomonas putida F1.</title>
        <authorList>
            <consortium name="US DOE Joint Genome Institute"/>
            <person name="Copeland A."/>
            <person name="Lucas S."/>
            <person name="Lapidus A."/>
            <person name="Barry K."/>
            <person name="Detter J.C."/>
            <person name="Glavina del Rio T."/>
            <person name="Hammon N."/>
            <person name="Israni S."/>
            <person name="Dalin E."/>
            <person name="Tice H."/>
            <person name="Pitluck S."/>
            <person name="Chain P."/>
            <person name="Malfatti S."/>
            <person name="Shin M."/>
            <person name="Vergez L."/>
            <person name="Schmutz J."/>
            <person name="Larimer F."/>
            <person name="Land M."/>
            <person name="Hauser L."/>
            <person name="Kyrpides N."/>
            <person name="Lykidis A."/>
            <person name="Parales R."/>
            <person name="Richardson P."/>
        </authorList>
    </citation>
    <scope>NUCLEOTIDE SEQUENCE [LARGE SCALE GENOMIC DNA]</scope>
    <source>
        <strain>ATCC 700007 / DSM 6899 / JCM 31910 / BCRC 17059 / LMG 24140 / F1</strain>
    </source>
</reference>
<reference key="2">
    <citation type="journal article" date="2010" name="J. Biol. Chem.">
        <title>Structural and kinetic characterization of 4-hydroxy-4-methyl-2-oxoglutarate/4-carboxy-4-hydroxy-2-oxoadipate aldolase, a protocatechuate degradation enzyme evolutionarily convergent with the HpaI and DmpG pyruvate aldolases.</title>
        <authorList>
            <person name="Wang W."/>
            <person name="Mazurkewich S."/>
            <person name="Kimber M.S."/>
            <person name="Seah S.Y."/>
        </authorList>
    </citation>
    <scope>X-RAY CRYSTALLOGRAPHY (1.82 ANGSTROMS) IN COMPLEX WITH MAGNESIUM AND PYRUVATE</scope>
    <scope>FUNCTION</scope>
    <scope>CATALYTIC ACTIVITY</scope>
    <scope>COFACTOR</scope>
    <scope>SUBUNIT</scope>
    <scope>MUTAGENESIS OF ARG-123</scope>
    <source>
        <strain>ATCC 700007 / DSM 6899 / JCM 31910 / BCRC 17059 / LMG 24140 / F1</strain>
    </source>
</reference>
<reference key="3">
    <citation type="journal article" date="2014" name="Biochemistry">
        <title>Biochemical and structural analysis of RraA proteins to decipher their relationships with 4-hydroxy-4-methyl-2-oxoglutarate/4-carboxy-4-hydroxy-2-oxoadipate aldolases.</title>
        <authorList>
            <person name="Mazurkewich S."/>
            <person name="Wang W."/>
            <person name="Seah S.Y."/>
        </authorList>
    </citation>
    <scope>FUNCTION</scope>
    <scope>CATALYTIC ACTIVITY</scope>
</reference>
<evidence type="ECO:0000269" key="1">
    <source>
    </source>
</evidence>
<evidence type="ECO:0000269" key="2">
    <source>
    </source>
</evidence>
<evidence type="ECO:0000305" key="3"/>
<evidence type="ECO:0007744" key="4">
    <source>
        <dbReference type="PDB" id="3NOJ"/>
    </source>
</evidence>
<evidence type="ECO:0007829" key="5">
    <source>
        <dbReference type="PDB" id="3NOJ"/>
    </source>
</evidence>
<keyword id="KW-0002">3D-structure</keyword>
<keyword id="KW-0456">Lyase</keyword>
<keyword id="KW-0460">Magnesium</keyword>
<keyword id="KW-0479">Metal-binding</keyword>
<organism>
    <name type="scientific">Pseudomonas putida (strain ATCC 700007 / DSM 6899 / JCM 31910 / BCRC 17059 / LMG 24140 / F1)</name>
    <dbReference type="NCBI Taxonomy" id="351746"/>
    <lineage>
        <taxon>Bacteria</taxon>
        <taxon>Pseudomonadati</taxon>
        <taxon>Pseudomonadota</taxon>
        <taxon>Gammaproteobacteria</taxon>
        <taxon>Pseudomonadales</taxon>
        <taxon>Pseudomonadaceae</taxon>
        <taxon>Pseudomonas</taxon>
    </lineage>
</organism>
<gene>
    <name type="ordered locus">Pput_1361</name>
</gene>
<comment type="function">
    <text evidence="1 2">Catalyzes the last step of the bacterial protocatechuate 4,5-cleavage pathway. The preferred substrates of the enzyme are 2-keto-4-hydroxy acids with a 4-carboxylate substitution. Catalyzes the conversion of 4-hydroxy-4-methyl-2-oxoglutarate (HMG) to pyruvate. Also catalyzes the conversion of 4-carboxy-4-hydroxy-2-oxoadipic acid (CHA) to pyruvate and oxaloacetate.</text>
</comment>
<comment type="catalytic activity">
    <reaction evidence="1 2">
        <text>4-hydroxy-4-methyl-2-oxoglutarate = 2 pyruvate</text>
        <dbReference type="Rhea" id="RHEA:22748"/>
        <dbReference type="ChEBI" id="CHEBI:15361"/>
        <dbReference type="ChEBI" id="CHEBI:58276"/>
        <dbReference type="EC" id="4.1.3.17"/>
    </reaction>
</comment>
<comment type="catalytic activity">
    <reaction evidence="1">
        <text>2-hydroxy-4-oxobutane-1,2,4-tricarboxylate = oxaloacetate + pyruvate</text>
        <dbReference type="Rhea" id="RHEA:28935"/>
        <dbReference type="ChEBI" id="CHEBI:15361"/>
        <dbReference type="ChEBI" id="CHEBI:16452"/>
        <dbReference type="ChEBI" id="CHEBI:58075"/>
        <dbReference type="EC" id="4.1.3.17"/>
    </reaction>
</comment>
<comment type="catalytic activity">
    <reaction evidence="1">
        <text>oxaloacetate + H(+) = pyruvate + CO2</text>
        <dbReference type="Rhea" id="RHEA:15641"/>
        <dbReference type="ChEBI" id="CHEBI:15361"/>
        <dbReference type="ChEBI" id="CHEBI:15378"/>
        <dbReference type="ChEBI" id="CHEBI:16452"/>
        <dbReference type="ChEBI" id="CHEBI:16526"/>
        <dbReference type="EC" id="4.1.1.112"/>
    </reaction>
</comment>
<comment type="cofactor">
    <cofactor evidence="1">
        <name>Mg(2+)</name>
        <dbReference type="ChEBI" id="CHEBI:18420"/>
    </cofactor>
</comment>
<comment type="biophysicochemical properties">
    <kinetics>
        <KM evidence="1">0.3 mM for oxaloacetate (in presence of 1 mM of magnesium)</KM>
        <KM evidence="1">0.036 mM for oxaloacetate (in presence of 1 mM of manganese)</KM>
        <KM evidence="1">0.26 mM for 4-hydroxy-4-methyl-2-oxoglutarate (in presence of 1 mM of magnesium)</KM>
        <KM evidence="1">0.022 mM for 4-hydroxy-4-methyl-2-oxoglutarate (in presence of 1 mM of manganese)</KM>
        <KM evidence="1">0.066 mM for 4-carboxy-4-hydroxy-2-oxoadipic acid or 2-hydroxy-4-oxobutane-1,2,4-tricarboxylic (in presence of 1 mM of magnesium)</KM>
        <KM evidence="1">0.03 mM for 4-carboxy-4-hydroxy-2-oxoadipic acid or 2-hydroxy-4-oxobutane-1,2,4-tricarboxylic (in presence of 1 mM of manganese)</KM>
        <KM evidence="1">0.15 mM for alpha-keto-gamma-hydroxyglutarate (in presence of 1 mM of magnesium)</KM>
        <KM evidence="1">0.071 mM for alpha-keto-gamma-hydroxyglutarate (in presence of 1 mM of manganese)</KM>
        <KM evidence="1">25 mM for 4-hydroxy-2-oxopentanoate (in presence of 1 mM of magnesium)</KM>
        <KM evidence="1">8.8 mM for 4-hydroxy-2-oxopentanoate (in presence of 1 mM of manganese)</KM>
    </kinetics>
</comment>
<comment type="subunit">
    <text evidence="1">Homohexamer.</text>
</comment>
<comment type="similarity">
    <text evidence="3">Belongs to the LigK/PcmE family.</text>
</comment>
<dbReference type="EC" id="4.1.3.17" evidence="1"/>
<dbReference type="EC" id="4.1.1.112" evidence="1"/>
<dbReference type="EMBL" id="CP000712">
    <property type="protein sequence ID" value="ABQ77519.1"/>
    <property type="molecule type" value="Genomic_DNA"/>
</dbReference>
<dbReference type="PDB" id="3NOJ">
    <property type="method" value="X-ray"/>
    <property type="resolution" value="1.82 A"/>
    <property type="chains" value="A=1-238"/>
</dbReference>
<dbReference type="PDBsum" id="3NOJ"/>
<dbReference type="SMR" id="A5W059"/>
<dbReference type="KEGG" id="ppf:Pput_1361"/>
<dbReference type="eggNOG" id="COG0684">
    <property type="taxonomic scope" value="Bacteria"/>
</dbReference>
<dbReference type="HOGENOM" id="CLU_072626_3_2_6"/>
<dbReference type="BRENDA" id="4.1.3.17">
    <property type="organism ID" value="5092"/>
</dbReference>
<dbReference type="BRENDA" id="4.1.3.B3">
    <property type="organism ID" value="5092"/>
</dbReference>
<dbReference type="SABIO-RK" id="A5W059"/>
<dbReference type="EvolutionaryTrace" id="A5W059"/>
<dbReference type="GO" id="GO:0047443">
    <property type="term" value="F:4-hydroxy-4-methyl-2-oxoglutarate aldolase activity"/>
    <property type="evidence" value="ECO:0007669"/>
    <property type="project" value="UniProtKB-EC"/>
</dbReference>
<dbReference type="GO" id="GO:0046872">
    <property type="term" value="F:metal ion binding"/>
    <property type="evidence" value="ECO:0007669"/>
    <property type="project" value="UniProtKB-KW"/>
</dbReference>
<dbReference type="GO" id="GO:0008948">
    <property type="term" value="F:oxaloacetate decarboxylase activity"/>
    <property type="evidence" value="ECO:0007669"/>
    <property type="project" value="UniProtKB-EC"/>
</dbReference>
<dbReference type="CDD" id="cd16841">
    <property type="entry name" value="RraA_family"/>
    <property type="match status" value="1"/>
</dbReference>
<dbReference type="FunFam" id="3.50.30.40:FF:000002">
    <property type="entry name" value="4-carboxy-4-hydroxy-2-oxoadipate aldolase/oxaloacetate decarboxylase"/>
    <property type="match status" value="1"/>
</dbReference>
<dbReference type="Gene3D" id="3.50.30.40">
    <property type="entry name" value="Ribonuclease E inhibitor RraA/RraA-like"/>
    <property type="match status" value="1"/>
</dbReference>
<dbReference type="InterPro" id="IPR014165">
    <property type="entry name" value="LigK_PcmE"/>
</dbReference>
<dbReference type="InterPro" id="IPR005493">
    <property type="entry name" value="RraA/RraA-like"/>
</dbReference>
<dbReference type="InterPro" id="IPR036704">
    <property type="entry name" value="RraA/RraA-like_sf"/>
</dbReference>
<dbReference type="NCBIfam" id="TIGR02798">
    <property type="entry name" value="ligK_PcmE"/>
    <property type="match status" value="1"/>
</dbReference>
<dbReference type="NCBIfam" id="NF006731">
    <property type="entry name" value="PRK09262.1"/>
    <property type="match status" value="1"/>
</dbReference>
<dbReference type="PANTHER" id="PTHR33254">
    <property type="entry name" value="4-HYDROXY-4-METHYL-2-OXOGLUTARATE ALDOLASE 3-RELATED"/>
    <property type="match status" value="1"/>
</dbReference>
<dbReference type="PANTHER" id="PTHR33254:SF16">
    <property type="entry name" value="BLR3842 PROTEIN"/>
    <property type="match status" value="1"/>
</dbReference>
<dbReference type="Pfam" id="PF03737">
    <property type="entry name" value="RraA-like"/>
    <property type="match status" value="1"/>
</dbReference>
<dbReference type="SUPFAM" id="SSF89562">
    <property type="entry name" value="RraA-like"/>
    <property type="match status" value="1"/>
</dbReference>
<feature type="chain" id="PRO_0000418488" description="4-hydroxy-4-methyl-2-oxoglutarate aldolase/4-carboxy-4-hydroxy-2-oxoadipate aldolase">
    <location>
        <begin position="1"/>
        <end position="238"/>
    </location>
</feature>
<feature type="binding site" evidence="1 4">
    <location>
        <begin position="101"/>
        <end position="104"/>
    </location>
    <ligand>
        <name>substrate</name>
    </ligand>
</feature>
<feature type="binding site" evidence="1 4">
    <location>
        <position position="123"/>
    </location>
    <ligand>
        <name>substrate</name>
    </ligand>
</feature>
<feature type="binding site" evidence="1">
    <location>
        <position position="124"/>
    </location>
    <ligand>
        <name>Mg(2+)</name>
        <dbReference type="ChEBI" id="CHEBI:18420"/>
    </ligand>
</feature>
<feature type="mutagenesis site" description="Abolishes catalytic activity." evidence="1">
    <original>R</original>
    <variation>A</variation>
    <location>
        <position position="123"/>
    </location>
</feature>
<feature type="turn" evidence="5">
    <location>
        <begin position="3"/>
        <end position="6"/>
    </location>
</feature>
<feature type="strand" evidence="5">
    <location>
        <begin position="9"/>
        <end position="11"/>
    </location>
</feature>
<feature type="helix" evidence="5">
    <location>
        <begin position="20"/>
        <end position="29"/>
    </location>
</feature>
<feature type="helix" evidence="5">
    <location>
        <begin position="31"/>
        <end position="37"/>
    </location>
</feature>
<feature type="strand" evidence="5">
    <location>
        <begin position="49"/>
        <end position="54"/>
    </location>
</feature>
<feature type="strand" evidence="5">
    <location>
        <begin position="57"/>
        <end position="66"/>
    </location>
</feature>
<feature type="helix" evidence="5">
    <location>
        <begin position="73"/>
        <end position="78"/>
    </location>
</feature>
<feature type="strand" evidence="5">
    <location>
        <begin position="85"/>
        <end position="93"/>
    </location>
</feature>
<feature type="helix" evidence="5">
    <location>
        <begin position="102"/>
        <end position="110"/>
    </location>
</feature>
<feature type="strand" evidence="5">
    <location>
        <begin position="115"/>
        <end position="122"/>
    </location>
</feature>
<feature type="helix" evidence="5">
    <location>
        <begin position="125"/>
        <end position="131"/>
    </location>
</feature>
<feature type="strand" evidence="5">
    <location>
        <begin position="134"/>
        <end position="140"/>
    </location>
</feature>
<feature type="strand" evidence="5">
    <location>
        <begin position="152"/>
        <end position="155"/>
    </location>
</feature>
<feature type="strand" evidence="5">
    <location>
        <begin position="157"/>
        <end position="159"/>
    </location>
</feature>
<feature type="strand" evidence="5">
    <location>
        <begin position="162"/>
        <end position="164"/>
    </location>
</feature>
<feature type="strand" evidence="5">
    <location>
        <begin position="169"/>
        <end position="173"/>
    </location>
</feature>
<feature type="strand" evidence="5">
    <location>
        <begin position="176"/>
        <end position="180"/>
    </location>
</feature>
<feature type="helix" evidence="5">
    <location>
        <begin position="182"/>
        <end position="184"/>
    </location>
</feature>
<feature type="helix" evidence="5">
    <location>
        <begin position="185"/>
        <end position="208"/>
    </location>
</feature>
<feature type="helix" evidence="5">
    <location>
        <begin position="212"/>
        <end position="215"/>
    </location>
</feature>
<feature type="helix" evidence="5">
    <location>
        <begin position="219"/>
        <end position="225"/>
    </location>
</feature>
<feature type="helix" evidence="5">
    <location>
        <begin position="233"/>
        <end position="235"/>
    </location>
</feature>
<protein>
    <recommendedName>
        <fullName>4-hydroxy-4-methyl-2-oxoglutarate aldolase/4-carboxy-4-hydroxy-2-oxoadipate aldolase</fullName>
        <shortName>HMG/CHA aldolase</shortName>
        <ecNumber evidence="1">4.1.3.17</ecNumber>
    </recommendedName>
    <alternativeName>
        <fullName>Oxaloacetate decarboxylase</fullName>
        <shortName>OAA decarboxylase</shortName>
        <ecNumber evidence="1">4.1.1.112</ecNumber>
    </alternativeName>
</protein>